<proteinExistence type="inferred from homology"/>
<organism>
    <name type="scientific">Nitrobacter winogradskyi</name>
    <name type="common">Nitrobacter agilis</name>
    <dbReference type="NCBI Taxonomy" id="913"/>
    <lineage>
        <taxon>Bacteria</taxon>
        <taxon>Pseudomonadati</taxon>
        <taxon>Pseudomonadota</taxon>
        <taxon>Alphaproteobacteria</taxon>
        <taxon>Hyphomicrobiales</taxon>
        <taxon>Nitrobacteraceae</taxon>
        <taxon>Nitrobacter</taxon>
    </lineage>
</organism>
<comment type="function">
    <text evidence="1">RuBisCO catalyzes two reactions: the carboxylation of D-ribulose 1,5-bisphosphate, the primary event in carbon dioxide fixation, as well as the oxidative fragmentation of the pentose substrate. Both reactions occur simultaneously and in competition at the same active site.</text>
</comment>
<comment type="catalytic activity">
    <reaction evidence="1">
        <text>2 (2R)-3-phosphoglycerate + 2 H(+) = D-ribulose 1,5-bisphosphate + CO2 + H2O</text>
        <dbReference type="Rhea" id="RHEA:23124"/>
        <dbReference type="ChEBI" id="CHEBI:15377"/>
        <dbReference type="ChEBI" id="CHEBI:15378"/>
        <dbReference type="ChEBI" id="CHEBI:16526"/>
        <dbReference type="ChEBI" id="CHEBI:57870"/>
        <dbReference type="ChEBI" id="CHEBI:58272"/>
        <dbReference type="EC" id="4.1.1.39"/>
    </reaction>
</comment>
<comment type="catalytic activity">
    <reaction evidence="1">
        <text>D-ribulose 1,5-bisphosphate + O2 = 2-phosphoglycolate + (2R)-3-phosphoglycerate + 2 H(+)</text>
        <dbReference type="Rhea" id="RHEA:36631"/>
        <dbReference type="ChEBI" id="CHEBI:15378"/>
        <dbReference type="ChEBI" id="CHEBI:15379"/>
        <dbReference type="ChEBI" id="CHEBI:57870"/>
        <dbReference type="ChEBI" id="CHEBI:58033"/>
        <dbReference type="ChEBI" id="CHEBI:58272"/>
    </reaction>
</comment>
<comment type="cofactor">
    <cofactor evidence="1">
        <name>Mg(2+)</name>
        <dbReference type="ChEBI" id="CHEBI:18420"/>
    </cofactor>
    <text evidence="1">Binds 1 Mg(2+) ion per subunit.</text>
</comment>
<comment type="subunit">
    <text evidence="1">Heterohexadecamer of 8 large chains and 8 small chains.</text>
</comment>
<comment type="miscellaneous">
    <text evidence="1">The basic functional RuBisCO is composed of a large chain homodimer in a 'head-to-tail' conformation. In form I RuBisCO this homodimer is arranged in a barrel-like tetramer with the small subunits forming a tetrameric 'cap' on each end of the 'barrel'.</text>
</comment>
<comment type="similarity">
    <text evidence="1">Belongs to the RuBisCO large chain family. Type I subfamily.</text>
</comment>
<keyword id="KW-0113">Calvin cycle</keyword>
<keyword id="KW-0120">Carbon dioxide fixation</keyword>
<keyword id="KW-0456">Lyase</keyword>
<keyword id="KW-0460">Magnesium</keyword>
<keyword id="KW-0479">Metal-binding</keyword>
<keyword id="KW-0503">Monooxygenase</keyword>
<keyword id="KW-0560">Oxidoreductase</keyword>
<gene>
    <name evidence="1" type="primary">cbbL</name>
</gene>
<evidence type="ECO:0000255" key="1">
    <source>
        <dbReference type="HAMAP-Rule" id="MF_01338"/>
    </source>
</evidence>
<name>RBL_NITWI</name>
<protein>
    <recommendedName>
        <fullName evidence="1">Ribulose bisphosphate carboxylase large chain</fullName>
        <shortName evidence="1">RuBisCO large subunit</shortName>
        <ecNumber evidence="1">4.1.1.39</ecNumber>
    </recommendedName>
</protein>
<accession>Q9XD77</accession>
<accession>Q9XD76</accession>
<reference key="1">
    <citation type="submission" date="1998-11" db="EMBL/GenBank/DDBJ databases">
        <title>cbbL/S from Nitrobacter agilis ATCC14123.</title>
        <authorList>
            <person name="Takahashi R."/>
            <person name="Nagaoka R."/>
            <person name="Masuko T."/>
            <person name="Tokuyama T."/>
        </authorList>
    </citation>
    <scope>NUCLEOTIDE SEQUENCE [GENOMIC DNA]</scope>
    <source>
        <strain>ATCC 14123 / NBRC 14297 / NB-6-2</strain>
    </source>
</reference>
<reference key="2">
    <citation type="submission" date="1998-11" db="EMBL/GenBank/DDBJ databases">
        <title>cbbL/S from Nitrobacter winogradskyi IFO14297.</title>
        <authorList>
            <person name="Takahashi R."/>
            <person name="Nagaoka R."/>
            <person name="Tokuyama T."/>
        </authorList>
    </citation>
    <scope>NUCLEOTIDE SEQUENCE [GENOMIC DNA]</scope>
    <source>
        <strain>ATCC 14123 / NBRC 14297 / NB-6-2</strain>
    </source>
</reference>
<feature type="chain" id="PRO_0000062634" description="Ribulose bisphosphate carboxylase large chain">
    <location>
        <begin position="1"/>
        <end position="473"/>
    </location>
</feature>
<feature type="active site" description="Proton acceptor" evidence="1">
    <location>
        <position position="168"/>
    </location>
</feature>
<feature type="active site" description="Proton acceptor" evidence="1">
    <location>
        <position position="287"/>
    </location>
</feature>
<feature type="binding site" description="in homodimeric partner" evidence="1">
    <location>
        <position position="116"/>
    </location>
    <ligand>
        <name>substrate</name>
    </ligand>
</feature>
<feature type="binding site" evidence="1">
    <location>
        <position position="166"/>
    </location>
    <ligand>
        <name>substrate</name>
    </ligand>
</feature>
<feature type="binding site" evidence="1">
    <location>
        <position position="170"/>
    </location>
    <ligand>
        <name>substrate</name>
    </ligand>
</feature>
<feature type="binding site" description="via carbamate group" evidence="1">
    <location>
        <position position="194"/>
    </location>
    <ligand>
        <name>Mg(2+)</name>
        <dbReference type="ChEBI" id="CHEBI:18420"/>
    </ligand>
</feature>
<feature type="binding site" evidence="1">
    <location>
        <position position="196"/>
    </location>
    <ligand>
        <name>Mg(2+)</name>
        <dbReference type="ChEBI" id="CHEBI:18420"/>
    </ligand>
</feature>
<feature type="binding site" evidence="1">
    <location>
        <position position="197"/>
    </location>
    <ligand>
        <name>Mg(2+)</name>
        <dbReference type="ChEBI" id="CHEBI:18420"/>
    </ligand>
</feature>
<feature type="binding site" evidence="1">
    <location>
        <position position="288"/>
    </location>
    <ligand>
        <name>substrate</name>
    </ligand>
</feature>
<feature type="binding site" evidence="1">
    <location>
        <position position="320"/>
    </location>
    <ligand>
        <name>substrate</name>
    </ligand>
</feature>
<feature type="binding site" evidence="1">
    <location>
        <position position="372"/>
    </location>
    <ligand>
        <name>substrate</name>
    </ligand>
</feature>
<feature type="site" description="Transition state stabilizer" evidence="1">
    <location>
        <position position="327"/>
    </location>
</feature>
<feature type="modified residue" description="N6-carboxylysine" evidence="1">
    <location>
        <position position="194"/>
    </location>
</feature>
<feature type="sequence variant" description="In strain: IFO 14297.">
    <original>P</original>
    <variation>N</variation>
    <location>
        <position position="39"/>
    </location>
</feature>
<feature type="sequence variant" description="In strain: IFO 14297.">
    <original>E</original>
    <variation>K</variation>
    <location>
        <position position="184"/>
    </location>
</feature>
<feature type="sequence variant" description="In strain: IFO 14297.">
    <original>E</original>
    <variation>K</variation>
    <location>
        <position position="197"/>
    </location>
</feature>
<feature type="sequence variant" description="In strain: IFO 14297.">
    <original>P</original>
    <variation>L</variation>
    <location>
        <position position="313"/>
    </location>
</feature>
<feature type="sequence variant" description="In strain: IFO 14297.">
    <original>G</original>
    <variation>A</variation>
    <location>
        <position position="354"/>
    </location>
</feature>
<feature type="sequence variant" description="In strain: IFO 14297.">
    <original>Q</original>
    <variation>H</variation>
    <location>
        <position position="444"/>
    </location>
</feature>
<sequence>MAVKSYQAGVTQYRQSYWQPDYMPLDTDILACFKITPQPGVDREEAAAAVAAESSCGTWTTVWTDLLTDLDYYKGRAYRLEDVPGDDTCYYAFIAYPIDLFEEGSVVNVFTSLVGNVFGFKAVRALRLEDLRFPIAYVKTCGGPPHGIQVERDKLNKYGRPLLGCTIKPKLGLSAKNYGRACYEALRGGLDFTKDDENINSQPFMRWRDRFDFVMEAVQKAEQETGERKGHYLNVTAPTPEEMYKRAEYAKEIRAPIIMHDYLAGGLCANAGLANWCRNNGMLLHIHRAMHAVIDRNPHHGIHFRVLTKILRPSGGDHLHTGTVVGKLEGDRASTLGWIDLLRESFVPEDRSRGIFFDQDWGSMPGGFAVASGGIHVWHMPALVTIFGDDSVLQFGGGTLGHPWGNAAGAHANRVALEACVQARGEGRHLEKEGKDILTAAAAQSPELKIAMETWKEIKFEFETMDKLAIANK</sequence>
<dbReference type="EC" id="4.1.1.39" evidence="1"/>
<dbReference type="EMBL" id="AF109914">
    <property type="protein sequence ID" value="AAD41020.1"/>
    <property type="molecule type" value="Genomic_DNA"/>
</dbReference>
<dbReference type="EMBL" id="AF109915">
    <property type="protein sequence ID" value="AAD41022.1"/>
    <property type="molecule type" value="Genomic_DNA"/>
</dbReference>
<dbReference type="SMR" id="Q9XD77"/>
<dbReference type="GO" id="GO:0000287">
    <property type="term" value="F:magnesium ion binding"/>
    <property type="evidence" value="ECO:0007669"/>
    <property type="project" value="UniProtKB-UniRule"/>
</dbReference>
<dbReference type="GO" id="GO:0004497">
    <property type="term" value="F:monooxygenase activity"/>
    <property type="evidence" value="ECO:0007669"/>
    <property type="project" value="UniProtKB-KW"/>
</dbReference>
<dbReference type="GO" id="GO:0016984">
    <property type="term" value="F:ribulose-bisphosphate carboxylase activity"/>
    <property type="evidence" value="ECO:0007669"/>
    <property type="project" value="UniProtKB-UniRule"/>
</dbReference>
<dbReference type="GO" id="GO:0019253">
    <property type="term" value="P:reductive pentose-phosphate cycle"/>
    <property type="evidence" value="ECO:0007669"/>
    <property type="project" value="UniProtKB-UniRule"/>
</dbReference>
<dbReference type="Gene3D" id="3.20.20.110">
    <property type="entry name" value="Ribulose bisphosphate carboxylase, large subunit, C-terminal domain"/>
    <property type="match status" value="1"/>
</dbReference>
<dbReference type="Gene3D" id="3.30.70.150">
    <property type="entry name" value="RuBisCO large subunit, N-terminal domain"/>
    <property type="match status" value="1"/>
</dbReference>
<dbReference type="HAMAP" id="MF_01338">
    <property type="entry name" value="RuBisCO_L_type1"/>
    <property type="match status" value="1"/>
</dbReference>
<dbReference type="InterPro" id="IPR033966">
    <property type="entry name" value="RuBisCO"/>
</dbReference>
<dbReference type="InterPro" id="IPR020878">
    <property type="entry name" value="RuBisCo_large_chain_AS"/>
</dbReference>
<dbReference type="InterPro" id="IPR000685">
    <property type="entry name" value="RuBisCO_lsu_C"/>
</dbReference>
<dbReference type="InterPro" id="IPR036376">
    <property type="entry name" value="RuBisCO_lsu_C_sf"/>
</dbReference>
<dbReference type="InterPro" id="IPR017443">
    <property type="entry name" value="RuBisCO_lsu_fd_N"/>
</dbReference>
<dbReference type="InterPro" id="IPR036422">
    <property type="entry name" value="RuBisCO_lsu_N_sf"/>
</dbReference>
<dbReference type="InterPro" id="IPR020888">
    <property type="entry name" value="RuBisCO_lsuI"/>
</dbReference>
<dbReference type="NCBIfam" id="NF003252">
    <property type="entry name" value="PRK04208.1"/>
    <property type="match status" value="1"/>
</dbReference>
<dbReference type="PANTHER" id="PTHR42704">
    <property type="entry name" value="RIBULOSE BISPHOSPHATE CARBOXYLASE"/>
    <property type="match status" value="1"/>
</dbReference>
<dbReference type="PANTHER" id="PTHR42704:SF17">
    <property type="entry name" value="RIBULOSE BISPHOSPHATE CARBOXYLASE LARGE CHAIN"/>
    <property type="match status" value="1"/>
</dbReference>
<dbReference type="Pfam" id="PF00016">
    <property type="entry name" value="RuBisCO_large"/>
    <property type="match status" value="1"/>
</dbReference>
<dbReference type="Pfam" id="PF02788">
    <property type="entry name" value="RuBisCO_large_N"/>
    <property type="match status" value="1"/>
</dbReference>
<dbReference type="SFLD" id="SFLDG01052">
    <property type="entry name" value="RuBisCO"/>
    <property type="match status" value="1"/>
</dbReference>
<dbReference type="SFLD" id="SFLDS00014">
    <property type="entry name" value="RuBisCO"/>
    <property type="match status" value="1"/>
</dbReference>
<dbReference type="SFLD" id="SFLDG00301">
    <property type="entry name" value="RuBisCO-like_proteins"/>
    <property type="match status" value="1"/>
</dbReference>
<dbReference type="SUPFAM" id="SSF51649">
    <property type="entry name" value="RuBisCo, C-terminal domain"/>
    <property type="match status" value="1"/>
</dbReference>
<dbReference type="SUPFAM" id="SSF54966">
    <property type="entry name" value="RuBisCO, large subunit, small (N-terminal) domain"/>
    <property type="match status" value="1"/>
</dbReference>
<dbReference type="PROSITE" id="PS00157">
    <property type="entry name" value="RUBISCO_LARGE"/>
    <property type="match status" value="1"/>
</dbReference>